<evidence type="ECO:0000255" key="1">
    <source>
        <dbReference type="HAMAP-Rule" id="MF_01017"/>
    </source>
</evidence>
<sequence length="200" mass="21006">MAKVLVLYYSSYGHVETMAQHIVEGAKSVPGVEVTLKRVPETIPVDQARAIGVKVDQAAPVATVDELADYDAIIFGTPTRFGNMAGQMRTFLDQTGGLWMKGALVGKIGSVFASTGTQHGGQETTITSFHTTLLHHGMVIVGVPYACSGLVNMNEITGGTPYGATTLAGADGSRQPSANELDIARYQGKHVAELASKLAS</sequence>
<dbReference type="EC" id="1.6.5.2" evidence="1"/>
<dbReference type="EMBL" id="CP000960">
    <property type="protein sequence ID" value="ACA95728.1"/>
    <property type="molecule type" value="Genomic_DNA"/>
</dbReference>
<dbReference type="SMR" id="B1KBY1"/>
<dbReference type="CAZy" id="AA6">
    <property type="family name" value="Auxiliary Activities 6"/>
</dbReference>
<dbReference type="GeneID" id="83053245"/>
<dbReference type="KEGG" id="bcm:Bcenmc03_6613"/>
<dbReference type="HOGENOM" id="CLU_051402_0_2_4"/>
<dbReference type="Proteomes" id="UP000002169">
    <property type="component" value="Chromosome 3"/>
</dbReference>
<dbReference type="GO" id="GO:0016020">
    <property type="term" value="C:membrane"/>
    <property type="evidence" value="ECO:0007669"/>
    <property type="project" value="TreeGrafter"/>
</dbReference>
<dbReference type="GO" id="GO:0050660">
    <property type="term" value="F:flavin adenine dinucleotide binding"/>
    <property type="evidence" value="ECO:0007669"/>
    <property type="project" value="UniProtKB-UniRule"/>
</dbReference>
<dbReference type="GO" id="GO:0010181">
    <property type="term" value="F:FMN binding"/>
    <property type="evidence" value="ECO:0007669"/>
    <property type="project" value="InterPro"/>
</dbReference>
<dbReference type="GO" id="GO:0051287">
    <property type="term" value="F:NAD binding"/>
    <property type="evidence" value="ECO:0007669"/>
    <property type="project" value="UniProtKB-UniRule"/>
</dbReference>
<dbReference type="GO" id="GO:0050136">
    <property type="term" value="F:NADH:ubiquinone reductase (non-electrogenic) activity"/>
    <property type="evidence" value="ECO:0007669"/>
    <property type="project" value="RHEA"/>
</dbReference>
<dbReference type="GO" id="GO:0050661">
    <property type="term" value="F:NADP binding"/>
    <property type="evidence" value="ECO:0007669"/>
    <property type="project" value="UniProtKB-UniRule"/>
</dbReference>
<dbReference type="GO" id="GO:0008753">
    <property type="term" value="F:NADPH dehydrogenase (quinone) activity"/>
    <property type="evidence" value="ECO:0007669"/>
    <property type="project" value="RHEA"/>
</dbReference>
<dbReference type="FunFam" id="3.40.50.360:FF:000001">
    <property type="entry name" value="NAD(P)H dehydrogenase (Quinone) FQR1-like"/>
    <property type="match status" value="1"/>
</dbReference>
<dbReference type="Gene3D" id="3.40.50.360">
    <property type="match status" value="1"/>
</dbReference>
<dbReference type="HAMAP" id="MF_01017">
    <property type="entry name" value="NQOR"/>
    <property type="match status" value="1"/>
</dbReference>
<dbReference type="InterPro" id="IPR008254">
    <property type="entry name" value="Flavodoxin/NO_synth"/>
</dbReference>
<dbReference type="InterPro" id="IPR029039">
    <property type="entry name" value="Flavoprotein-like_sf"/>
</dbReference>
<dbReference type="InterPro" id="IPR010089">
    <property type="entry name" value="Flavoprotein_WrbA-like"/>
</dbReference>
<dbReference type="InterPro" id="IPR005025">
    <property type="entry name" value="FMN_Rdtase-like_dom"/>
</dbReference>
<dbReference type="InterPro" id="IPR037513">
    <property type="entry name" value="NQO"/>
</dbReference>
<dbReference type="NCBIfam" id="TIGR01755">
    <property type="entry name" value="flav_wrbA"/>
    <property type="match status" value="1"/>
</dbReference>
<dbReference type="NCBIfam" id="NF002999">
    <property type="entry name" value="PRK03767.1"/>
    <property type="match status" value="1"/>
</dbReference>
<dbReference type="PANTHER" id="PTHR30546">
    <property type="entry name" value="FLAVODOXIN-RELATED PROTEIN WRBA-RELATED"/>
    <property type="match status" value="1"/>
</dbReference>
<dbReference type="PANTHER" id="PTHR30546:SF23">
    <property type="entry name" value="FLAVOPROTEIN-LIKE PROTEIN YCP4-RELATED"/>
    <property type="match status" value="1"/>
</dbReference>
<dbReference type="Pfam" id="PF03358">
    <property type="entry name" value="FMN_red"/>
    <property type="match status" value="1"/>
</dbReference>
<dbReference type="SUPFAM" id="SSF52218">
    <property type="entry name" value="Flavoproteins"/>
    <property type="match status" value="1"/>
</dbReference>
<dbReference type="PROSITE" id="PS50902">
    <property type="entry name" value="FLAVODOXIN_LIKE"/>
    <property type="match status" value="1"/>
</dbReference>
<reference key="1">
    <citation type="submission" date="2008-02" db="EMBL/GenBank/DDBJ databases">
        <title>Complete sequence of chromosome 3 of Burkholderia cenocepacia MC0-3.</title>
        <authorList>
            <person name="Copeland A."/>
            <person name="Lucas S."/>
            <person name="Lapidus A."/>
            <person name="Barry K."/>
            <person name="Bruce D."/>
            <person name="Goodwin L."/>
            <person name="Glavina del Rio T."/>
            <person name="Dalin E."/>
            <person name="Tice H."/>
            <person name="Pitluck S."/>
            <person name="Chain P."/>
            <person name="Malfatti S."/>
            <person name="Shin M."/>
            <person name="Vergez L."/>
            <person name="Schmutz J."/>
            <person name="Larimer F."/>
            <person name="Land M."/>
            <person name="Hauser L."/>
            <person name="Kyrpides N."/>
            <person name="Mikhailova N."/>
            <person name="Tiedje J."/>
            <person name="Richardson P."/>
        </authorList>
    </citation>
    <scope>NUCLEOTIDE SEQUENCE [LARGE SCALE GENOMIC DNA]</scope>
    <source>
        <strain>MC0-3</strain>
    </source>
</reference>
<organism>
    <name type="scientific">Burkholderia orbicola (strain MC0-3)</name>
    <dbReference type="NCBI Taxonomy" id="406425"/>
    <lineage>
        <taxon>Bacteria</taxon>
        <taxon>Pseudomonadati</taxon>
        <taxon>Pseudomonadota</taxon>
        <taxon>Betaproteobacteria</taxon>
        <taxon>Burkholderiales</taxon>
        <taxon>Burkholderiaceae</taxon>
        <taxon>Burkholderia</taxon>
        <taxon>Burkholderia cepacia complex</taxon>
        <taxon>Burkholderia orbicola</taxon>
    </lineage>
</organism>
<name>NQOR_BURO0</name>
<gene>
    <name type="ordered locus">Bcenmc03_6613</name>
</gene>
<protein>
    <recommendedName>
        <fullName evidence="1">NAD(P)H dehydrogenase (quinone)</fullName>
        <ecNumber evidence="1">1.6.5.2</ecNumber>
    </recommendedName>
    <alternativeName>
        <fullName>Flavoprotein WrbA</fullName>
    </alternativeName>
    <alternativeName>
        <fullName evidence="1">NAD(P)H:quinone oxidoreductase</fullName>
        <shortName evidence="1">NQO</shortName>
    </alternativeName>
</protein>
<feature type="chain" id="PRO_1000200617" description="NAD(P)H dehydrogenase (quinone)">
    <location>
        <begin position="1"/>
        <end position="200"/>
    </location>
</feature>
<feature type="domain" description="Flavodoxin-like" evidence="1">
    <location>
        <begin position="4"/>
        <end position="191"/>
    </location>
</feature>
<feature type="binding site" evidence="1">
    <location>
        <begin position="10"/>
        <end position="15"/>
    </location>
    <ligand>
        <name>FMN</name>
        <dbReference type="ChEBI" id="CHEBI:58210"/>
    </ligand>
</feature>
<feature type="binding site" evidence="1">
    <location>
        <position position="12"/>
    </location>
    <ligand>
        <name>NAD(+)</name>
        <dbReference type="ChEBI" id="CHEBI:57540"/>
    </ligand>
</feature>
<feature type="binding site" evidence="1">
    <location>
        <begin position="79"/>
        <end position="81"/>
    </location>
    <ligand>
        <name>FMN</name>
        <dbReference type="ChEBI" id="CHEBI:58210"/>
    </ligand>
</feature>
<feature type="binding site" evidence="1">
    <location>
        <position position="99"/>
    </location>
    <ligand>
        <name>substrate</name>
    </ligand>
</feature>
<feature type="binding site" evidence="1">
    <location>
        <begin position="114"/>
        <end position="120"/>
    </location>
    <ligand>
        <name>FMN</name>
        <dbReference type="ChEBI" id="CHEBI:58210"/>
    </ligand>
</feature>
<feature type="binding site" evidence="1">
    <location>
        <position position="135"/>
    </location>
    <ligand>
        <name>FMN</name>
        <dbReference type="ChEBI" id="CHEBI:58210"/>
    </ligand>
</feature>
<accession>B1KBY1</accession>
<keyword id="KW-0285">Flavoprotein</keyword>
<keyword id="KW-0288">FMN</keyword>
<keyword id="KW-0520">NAD</keyword>
<keyword id="KW-0521">NADP</keyword>
<keyword id="KW-0547">Nucleotide-binding</keyword>
<keyword id="KW-0560">Oxidoreductase</keyword>
<proteinExistence type="inferred from homology"/>
<comment type="catalytic activity">
    <reaction evidence="1">
        <text>a quinone + NADH + H(+) = a quinol + NAD(+)</text>
        <dbReference type="Rhea" id="RHEA:46160"/>
        <dbReference type="ChEBI" id="CHEBI:15378"/>
        <dbReference type="ChEBI" id="CHEBI:24646"/>
        <dbReference type="ChEBI" id="CHEBI:57540"/>
        <dbReference type="ChEBI" id="CHEBI:57945"/>
        <dbReference type="ChEBI" id="CHEBI:132124"/>
        <dbReference type="EC" id="1.6.5.2"/>
    </reaction>
</comment>
<comment type="catalytic activity">
    <reaction evidence="1">
        <text>a quinone + NADPH + H(+) = a quinol + NADP(+)</text>
        <dbReference type="Rhea" id="RHEA:46164"/>
        <dbReference type="ChEBI" id="CHEBI:15378"/>
        <dbReference type="ChEBI" id="CHEBI:24646"/>
        <dbReference type="ChEBI" id="CHEBI:57783"/>
        <dbReference type="ChEBI" id="CHEBI:58349"/>
        <dbReference type="ChEBI" id="CHEBI:132124"/>
        <dbReference type="EC" id="1.6.5.2"/>
    </reaction>
</comment>
<comment type="cofactor">
    <cofactor evidence="1">
        <name>FMN</name>
        <dbReference type="ChEBI" id="CHEBI:58210"/>
    </cofactor>
    <text evidence="1">Binds 1 FMN per monomer.</text>
</comment>
<comment type="similarity">
    <text evidence="1">Belongs to the WrbA family.</text>
</comment>